<dbReference type="EMBL" id="BC103183">
    <property type="protein sequence ID" value="AAI03184.1"/>
    <property type="molecule type" value="mRNA"/>
</dbReference>
<dbReference type="RefSeq" id="NP_001029965.1">
    <property type="nucleotide sequence ID" value="NM_001034793.1"/>
</dbReference>
<dbReference type="FunCoup" id="Q3SZ36">
    <property type="interactions" value="3357"/>
</dbReference>
<dbReference type="STRING" id="9913.ENSBTAP00000060679"/>
<dbReference type="PaxDb" id="9913-ENSBTAP00000029309"/>
<dbReference type="GeneID" id="616554"/>
<dbReference type="KEGG" id="bta:616554"/>
<dbReference type="CTD" id="129787"/>
<dbReference type="VEuPathDB" id="HostDB:ENSBTAG00000050718"/>
<dbReference type="eggNOG" id="ENOG502RZ4T">
    <property type="taxonomic scope" value="Eukaryota"/>
</dbReference>
<dbReference type="HOGENOM" id="CLU_101161_1_1_1"/>
<dbReference type="InParanoid" id="Q3SZ36"/>
<dbReference type="OMA" id="TFSKQQY"/>
<dbReference type="OrthoDB" id="411535at2759"/>
<dbReference type="TreeFam" id="TF324883"/>
<dbReference type="Proteomes" id="UP000009136">
    <property type="component" value="Chromosome 8"/>
</dbReference>
<dbReference type="Bgee" id="ENSBTAG00000050718">
    <property type="expression patterns" value="Expressed in floor plate of diencephalon and 100 other cell types or tissues"/>
</dbReference>
<dbReference type="GO" id="GO:0005737">
    <property type="term" value="C:cytoplasm"/>
    <property type="evidence" value="ECO:0007669"/>
    <property type="project" value="UniProtKB-SubCell"/>
</dbReference>
<dbReference type="GO" id="GO:0031965">
    <property type="term" value="C:nuclear membrane"/>
    <property type="evidence" value="ECO:0000250"/>
    <property type="project" value="UniProtKB"/>
</dbReference>
<dbReference type="GO" id="GO:0003677">
    <property type="term" value="F:DNA binding"/>
    <property type="evidence" value="ECO:0007669"/>
    <property type="project" value="UniProtKB-KW"/>
</dbReference>
<dbReference type="GO" id="GO:0016477">
    <property type="term" value="P:cell migration"/>
    <property type="evidence" value="ECO:0000250"/>
    <property type="project" value="UniProtKB"/>
</dbReference>
<dbReference type="InterPro" id="IPR026721">
    <property type="entry name" value="TMEM18"/>
</dbReference>
<dbReference type="PANTHER" id="PTHR22593">
    <property type="entry name" value="TRANSMEMBRANE PROTEIN 18"/>
    <property type="match status" value="1"/>
</dbReference>
<dbReference type="PANTHER" id="PTHR22593:SF2">
    <property type="entry name" value="TRANSMEMBRANE PROTEIN 18"/>
    <property type="match status" value="1"/>
</dbReference>
<dbReference type="Pfam" id="PF14770">
    <property type="entry name" value="TMEM18"/>
    <property type="match status" value="1"/>
</dbReference>
<name>TMM18_BOVIN</name>
<organism>
    <name type="scientific">Bos taurus</name>
    <name type="common">Bovine</name>
    <dbReference type="NCBI Taxonomy" id="9913"/>
    <lineage>
        <taxon>Eukaryota</taxon>
        <taxon>Metazoa</taxon>
        <taxon>Chordata</taxon>
        <taxon>Craniata</taxon>
        <taxon>Vertebrata</taxon>
        <taxon>Euteleostomi</taxon>
        <taxon>Mammalia</taxon>
        <taxon>Eutheria</taxon>
        <taxon>Laurasiatheria</taxon>
        <taxon>Artiodactyla</taxon>
        <taxon>Ruminantia</taxon>
        <taxon>Pecora</taxon>
        <taxon>Bovidae</taxon>
        <taxon>Bovinae</taxon>
        <taxon>Bos</taxon>
    </lineage>
</organism>
<evidence type="ECO:0000250" key="1"/>
<evidence type="ECO:0000250" key="2">
    <source>
        <dbReference type="UniProtKB" id="Q96B42"/>
    </source>
</evidence>
<evidence type="ECO:0000255" key="3"/>
<evidence type="ECO:0000305" key="4"/>
<reference key="1">
    <citation type="submission" date="2005-08" db="EMBL/GenBank/DDBJ databases">
        <authorList>
            <consortium name="NIH - Mammalian Gene Collection (MGC) project"/>
        </authorList>
    </citation>
    <scope>NUCLEOTIDE SEQUENCE [LARGE SCALE MRNA]</scope>
    <source>
        <strain>Hereford</strain>
        <tissue>Hypothalamus</tissue>
    </source>
</reference>
<keyword id="KW-0175">Coiled coil</keyword>
<keyword id="KW-0963">Cytoplasm</keyword>
<keyword id="KW-0238">DNA-binding</keyword>
<keyword id="KW-0472">Membrane</keyword>
<keyword id="KW-0539">Nucleus</keyword>
<keyword id="KW-1185">Reference proteome</keyword>
<keyword id="KW-0804">Transcription</keyword>
<keyword id="KW-0812">Transmembrane</keyword>
<keyword id="KW-1133">Transmembrane helix</keyword>
<gene>
    <name type="primary">TMEM18</name>
</gene>
<comment type="function">
    <text evidence="1">Transcription repressor. Sequence-specific ssDNA and dsDNA binding protein, with preference for GCT end CTG repeats. Cell migration modulator which enhances the glioma-specific migration ability of neural stem cells (NSC) and neural precursor cells (NPC) (By similarity).</text>
</comment>
<comment type="subunit">
    <text evidence="1">Forms homooligomers, independently of the DNA-binding domain.</text>
</comment>
<comment type="subcellular location">
    <subcellularLocation>
        <location evidence="2">Cytoplasm</location>
    </subcellularLocation>
    <subcellularLocation>
        <location evidence="2">Nucleus membrane</location>
        <topology evidence="3">Multi-pass membrane protein</topology>
    </subcellularLocation>
</comment>
<comment type="similarity">
    <text evidence="4">Belongs to the TMEM18 family.</text>
</comment>
<accession>Q3SZ36</accession>
<proteinExistence type="evidence at transcript level"/>
<sequence length="139" mass="16053">MPSAFSVSRFPVSIPAVITQTDWTEPWLVGLAGFHVLCLLLTCFSSQRYRLQVGHFLCLVTLVYCAEYINEVAAMNWRLFSKHQYFDSRGMFISLVFSAPLLLNALVIVVLWVRKTLVVMTDLRSLREQRRARARPKEE</sequence>
<feature type="chain" id="PRO_0000284368" description="Transmembrane protein 18">
    <location>
        <begin position="1"/>
        <end position="139"/>
    </location>
</feature>
<feature type="topological domain" description="Perinuclear space" evidence="3">
    <location>
        <begin position="1"/>
        <end position="25"/>
    </location>
</feature>
<feature type="transmembrane region" description="Helical" evidence="3">
    <location>
        <begin position="26"/>
        <end position="46"/>
    </location>
</feature>
<feature type="topological domain" description="Nuclear" evidence="3">
    <location>
        <begin position="47"/>
        <end position="52"/>
    </location>
</feature>
<feature type="transmembrane region" description="Helical" evidence="3">
    <location>
        <begin position="53"/>
        <end position="73"/>
    </location>
</feature>
<feature type="topological domain" description="Perinuclear space" evidence="3">
    <location>
        <begin position="74"/>
        <end position="91"/>
    </location>
</feature>
<feature type="transmembrane region" description="Helical" evidence="3">
    <location>
        <begin position="92"/>
        <end position="112"/>
    </location>
</feature>
<feature type="topological domain" description="Nuclear" evidence="3">
    <location>
        <begin position="113"/>
        <end position="139"/>
    </location>
</feature>
<feature type="region of interest" description="DNA-binding" evidence="1">
    <location>
        <begin position="113"/>
        <end position="139"/>
    </location>
</feature>
<feature type="coiled-coil region" evidence="3">
    <location>
        <begin position="116"/>
        <end position="139"/>
    </location>
</feature>
<feature type="short sequence motif" description="Nuclear localization signal" evidence="1">
    <location>
        <begin position="130"/>
        <end position="138"/>
    </location>
</feature>
<protein>
    <recommendedName>
        <fullName>Transmembrane protein 18</fullName>
    </recommendedName>
</protein>